<gene>
    <name type="ordered locus">Maeo_1037</name>
</gene>
<comment type="similarity">
    <text evidence="1">Belongs to the UPF0179 family.</text>
</comment>
<evidence type="ECO:0000255" key="1">
    <source>
        <dbReference type="HAMAP-Rule" id="MF_00498"/>
    </source>
</evidence>
<name>Y1037_META3</name>
<proteinExistence type="inferred from homology"/>
<sequence length="145" mass="16297">MDKRITLIGSKIAKTGNEFIYCGVLEECSECRFKKICHDGLIVGKRYRIVSVRSAKHPCIAYGDGVKVIEVEPSNNFTILIESKKALEGLTLSHSDIQCNNILCKYYNLCHSEGMPEKYKIMELHEKIKCPKGNSLIKATVSTIN</sequence>
<accession>A6UVU3</accession>
<feature type="chain" id="PRO_0000378118" description="UPF0179 protein Maeo_1037">
    <location>
        <begin position="1"/>
        <end position="145"/>
    </location>
</feature>
<organism>
    <name type="scientific">Methanococcus aeolicus (strain ATCC BAA-1280 / DSM 17508 / OCM 812 / Nankai-3)</name>
    <dbReference type="NCBI Taxonomy" id="419665"/>
    <lineage>
        <taxon>Archaea</taxon>
        <taxon>Methanobacteriati</taxon>
        <taxon>Methanobacteriota</taxon>
        <taxon>Methanomada group</taxon>
        <taxon>Methanococci</taxon>
        <taxon>Methanococcales</taxon>
        <taxon>Methanococcaceae</taxon>
        <taxon>Methanococcus</taxon>
    </lineage>
</organism>
<reference key="1">
    <citation type="submission" date="2007-06" db="EMBL/GenBank/DDBJ databases">
        <title>Complete sequence of Methanococcus aeolicus Nankai-3.</title>
        <authorList>
            <consortium name="US DOE Joint Genome Institute"/>
            <person name="Copeland A."/>
            <person name="Lucas S."/>
            <person name="Lapidus A."/>
            <person name="Barry K."/>
            <person name="Glavina del Rio T."/>
            <person name="Dalin E."/>
            <person name="Tice H."/>
            <person name="Pitluck S."/>
            <person name="Chain P."/>
            <person name="Malfatti S."/>
            <person name="Shin M."/>
            <person name="Vergez L."/>
            <person name="Schmutz J."/>
            <person name="Larimer F."/>
            <person name="Land M."/>
            <person name="Hauser L."/>
            <person name="Kyrpides N."/>
            <person name="Lykidis A."/>
            <person name="Sieprawska-Lupa M."/>
            <person name="Whitman W.B."/>
            <person name="Richardson P."/>
        </authorList>
    </citation>
    <scope>NUCLEOTIDE SEQUENCE [LARGE SCALE GENOMIC DNA]</scope>
    <source>
        <strain>ATCC BAA-1280 / DSM 17508 / OCM 812 / Nankai-3</strain>
    </source>
</reference>
<protein>
    <recommendedName>
        <fullName evidence="1">UPF0179 protein Maeo_1037</fullName>
    </recommendedName>
</protein>
<dbReference type="EMBL" id="CP000743">
    <property type="protein sequence ID" value="ABR56615.1"/>
    <property type="molecule type" value="Genomic_DNA"/>
</dbReference>
<dbReference type="RefSeq" id="WP_011973747.1">
    <property type="nucleotide sequence ID" value="NC_009635.1"/>
</dbReference>
<dbReference type="STRING" id="419665.Maeo_1037"/>
<dbReference type="GeneID" id="5327593"/>
<dbReference type="KEGG" id="mae:Maeo_1037"/>
<dbReference type="eggNOG" id="arCOG04477">
    <property type="taxonomic scope" value="Archaea"/>
</dbReference>
<dbReference type="HOGENOM" id="CLU_121764_0_0_2"/>
<dbReference type="OrthoDB" id="24613at2157"/>
<dbReference type="Proteomes" id="UP000001106">
    <property type="component" value="Chromosome"/>
</dbReference>
<dbReference type="HAMAP" id="MF_00498">
    <property type="entry name" value="UPF0179"/>
    <property type="match status" value="1"/>
</dbReference>
<dbReference type="InterPro" id="IPR005369">
    <property type="entry name" value="UPF0179"/>
</dbReference>
<dbReference type="PANTHER" id="PTHR40699">
    <property type="entry name" value="UPF0179 PROTEIN MJ1627"/>
    <property type="match status" value="1"/>
</dbReference>
<dbReference type="PANTHER" id="PTHR40699:SF1">
    <property type="entry name" value="UPF0179 PROTEIN MJ1627"/>
    <property type="match status" value="1"/>
</dbReference>
<dbReference type="Pfam" id="PF03684">
    <property type="entry name" value="UPF0179"/>
    <property type="match status" value="1"/>
</dbReference>